<feature type="chain" id="PRO_0000314130" description="Transcription and mRNA export factor ENY2">
    <location>
        <begin position="1"/>
        <end position="101"/>
    </location>
</feature>
<feature type="cross-link" description="Glycyl lysine isopeptide (Lys-Gly) (interchain with G-Cter in SUMO2)" evidence="9">
    <location>
        <position position="74"/>
    </location>
</feature>
<feature type="splice variant" id="VSP_046891" description="In isoform 2." evidence="7">
    <location>
        <begin position="1"/>
        <end position="5"/>
    </location>
</feature>
<feature type="helix" evidence="10">
    <location>
        <begin position="10"/>
        <end position="22"/>
    </location>
</feature>
<feature type="helix" evidence="10">
    <location>
        <begin position="25"/>
        <end position="39"/>
    </location>
</feature>
<feature type="helix" evidence="10">
    <location>
        <begin position="42"/>
        <end position="57"/>
    </location>
</feature>
<feature type="turn" evidence="10">
    <location>
        <begin position="59"/>
        <end position="61"/>
    </location>
</feature>
<feature type="helix" evidence="10">
    <location>
        <begin position="64"/>
        <end position="78"/>
    </location>
</feature>
<feature type="helix" evidence="10">
    <location>
        <begin position="81"/>
        <end position="98"/>
    </location>
</feature>
<feature type="modified residue" description="N-acetylmethionine" evidence="8">
    <location sequence="Q9NPA8-2">
        <position position="1"/>
    </location>
</feature>
<keyword id="KW-0002">3D-structure</keyword>
<keyword id="KW-0007">Acetylation</keyword>
<keyword id="KW-0010">Activator</keyword>
<keyword id="KW-0025">Alternative splicing</keyword>
<keyword id="KW-0156">Chromatin regulator</keyword>
<keyword id="KW-1017">Isopeptide bond</keyword>
<keyword id="KW-0509">mRNA transport</keyword>
<keyword id="KW-0539">Nucleus</keyword>
<keyword id="KW-0653">Protein transport</keyword>
<keyword id="KW-1267">Proteomics identification</keyword>
<keyword id="KW-1185">Reference proteome</keyword>
<keyword id="KW-0804">Transcription</keyword>
<keyword id="KW-0805">Transcription regulation</keyword>
<keyword id="KW-0811">Translocation</keyword>
<keyword id="KW-0813">Transport</keyword>
<keyword id="KW-0832">Ubl conjugation</keyword>
<protein>
    <recommendedName>
        <fullName evidence="1">Transcription and mRNA export factor ENY2</fullName>
    </recommendedName>
    <alternativeName>
        <fullName evidence="1">Enhancer of yellow 2 transcription factor homolog</fullName>
    </alternativeName>
</protein>
<dbReference type="EMBL" id="AF173296">
    <property type="protein sequence ID" value="AAF89829.1"/>
    <property type="molecule type" value="mRNA"/>
</dbReference>
<dbReference type="EMBL" id="AF201940">
    <property type="protein sequence ID" value="AAF86876.1"/>
    <property type="molecule type" value="mRNA"/>
</dbReference>
<dbReference type="EMBL" id="AK290752">
    <property type="protein sequence ID" value="BAF83441.1"/>
    <property type="molecule type" value="mRNA"/>
</dbReference>
<dbReference type="EMBL" id="AK316560">
    <property type="protein sequence ID" value="BAG38149.1"/>
    <property type="molecule type" value="mRNA"/>
</dbReference>
<dbReference type="EMBL" id="CR457183">
    <property type="protein sequence ID" value="CAG33464.1"/>
    <property type="molecule type" value="mRNA"/>
</dbReference>
<dbReference type="EMBL" id="AC021237">
    <property type="status" value="NOT_ANNOTATED_CDS"/>
    <property type="molecule type" value="Genomic_DNA"/>
</dbReference>
<dbReference type="EMBL" id="CH471060">
    <property type="protein sequence ID" value="EAW91927.1"/>
    <property type="molecule type" value="Genomic_DNA"/>
</dbReference>
<dbReference type="EMBL" id="CH471060">
    <property type="protein sequence ID" value="EAW91930.1"/>
    <property type="molecule type" value="Genomic_DNA"/>
</dbReference>
<dbReference type="EMBL" id="BC007870">
    <property type="protein sequence ID" value="AAH07870.1"/>
    <property type="molecule type" value="mRNA"/>
</dbReference>
<dbReference type="CCDS" id="CCDS43762.1">
    <molecule id="Q9NPA8-1"/>
</dbReference>
<dbReference type="CCDS" id="CCDS55270.1">
    <molecule id="Q9NPA8-2"/>
</dbReference>
<dbReference type="RefSeq" id="NP_001180486.1">
    <molecule id="Q9NPA8-2"/>
    <property type="nucleotide sequence ID" value="NM_001193557.2"/>
</dbReference>
<dbReference type="RefSeq" id="NP_064574.1">
    <molecule id="Q9NPA8-1"/>
    <property type="nucleotide sequence ID" value="NM_020189.6"/>
</dbReference>
<dbReference type="PDB" id="4DHX">
    <property type="method" value="X-ray"/>
    <property type="resolution" value="2.10 A"/>
    <property type="chains" value="B/C/E/F=1-101"/>
</dbReference>
<dbReference type="PDBsum" id="4DHX"/>
<dbReference type="SMR" id="Q9NPA8"/>
<dbReference type="BioGRID" id="121267">
    <property type="interactions" value="181"/>
</dbReference>
<dbReference type="ComplexPortal" id="CPX-2477">
    <property type="entry name" value="TREX-2 transcription-export complex, CETN2 variant"/>
</dbReference>
<dbReference type="ComplexPortal" id="CPX-6802">
    <property type="entry name" value="SAGA complex, KAT2B variant"/>
</dbReference>
<dbReference type="ComplexPortal" id="CPX-7281">
    <property type="entry name" value="TREX-2 transcription-export complex, CETN3 variant"/>
</dbReference>
<dbReference type="ComplexPortal" id="CPX-900">
    <property type="entry name" value="SAGA complex, KAT2A variant"/>
</dbReference>
<dbReference type="ComplexPortal" id="CPX-903">
    <property type="entry name" value="TFTC histone acetylation complex"/>
</dbReference>
<dbReference type="CORUM" id="Q9NPA8"/>
<dbReference type="FunCoup" id="Q9NPA8">
    <property type="interactions" value="3039"/>
</dbReference>
<dbReference type="IntAct" id="Q9NPA8">
    <property type="interactions" value="145"/>
</dbReference>
<dbReference type="MINT" id="Q9NPA8"/>
<dbReference type="STRING" id="9606.ENSP00000429986"/>
<dbReference type="TCDB" id="1.I.1.1.3">
    <property type="family name" value="the nuclear pore complex (npc) family"/>
</dbReference>
<dbReference type="GlyGen" id="Q9NPA8">
    <property type="glycosylation" value="1 site, 1 O-linked glycan (1 site)"/>
</dbReference>
<dbReference type="iPTMnet" id="Q9NPA8"/>
<dbReference type="PhosphoSitePlus" id="Q9NPA8"/>
<dbReference type="BioMuta" id="ENY2"/>
<dbReference type="DMDM" id="74752879"/>
<dbReference type="CPTAC" id="CPTAC-1607"/>
<dbReference type="jPOST" id="Q9NPA8"/>
<dbReference type="MassIVE" id="Q9NPA8"/>
<dbReference type="PaxDb" id="9606-ENSP00000429986"/>
<dbReference type="PeptideAtlas" id="Q9NPA8"/>
<dbReference type="ProteomicsDB" id="32228"/>
<dbReference type="ProteomicsDB" id="81953">
    <molecule id="Q9NPA8-1"/>
</dbReference>
<dbReference type="Pumba" id="Q9NPA8"/>
<dbReference type="TopDownProteomics" id="Q9NPA8-1">
    <molecule id="Q9NPA8-1"/>
</dbReference>
<dbReference type="Antibodypedia" id="7042">
    <property type="antibodies" value="110 antibodies from 18 providers"/>
</dbReference>
<dbReference type="DNASU" id="56943"/>
<dbReference type="Ensembl" id="ENST00000521662.5">
    <molecule id="Q9NPA8-2"/>
    <property type="protein sequence ID" value="ENSP00000429713.1"/>
    <property type="gene ID" value="ENSG00000120533.13"/>
</dbReference>
<dbReference type="Ensembl" id="ENST00000521688.6">
    <molecule id="Q9NPA8-1"/>
    <property type="protein sequence ID" value="ENSP00000429986.1"/>
    <property type="gene ID" value="ENSG00000120533.13"/>
</dbReference>
<dbReference type="GeneID" id="56943"/>
<dbReference type="KEGG" id="hsa:56943"/>
<dbReference type="MANE-Select" id="ENST00000521688.6">
    <property type="protein sequence ID" value="ENSP00000429986.1"/>
    <property type="RefSeq nucleotide sequence ID" value="NM_020189.6"/>
    <property type="RefSeq protein sequence ID" value="NP_064574.1"/>
</dbReference>
<dbReference type="UCSC" id="uc003ync.4">
    <molecule id="Q9NPA8-1"/>
    <property type="organism name" value="human"/>
</dbReference>
<dbReference type="AGR" id="HGNC:24449"/>
<dbReference type="CTD" id="56943"/>
<dbReference type="DisGeNET" id="56943"/>
<dbReference type="GeneCards" id="ENY2"/>
<dbReference type="HGNC" id="HGNC:24449">
    <property type="gene designation" value="ENY2"/>
</dbReference>
<dbReference type="HPA" id="ENSG00000120533">
    <property type="expression patterns" value="Low tissue specificity"/>
</dbReference>
<dbReference type="MIM" id="619015">
    <property type="type" value="gene"/>
</dbReference>
<dbReference type="neXtProt" id="NX_Q9NPA8"/>
<dbReference type="OpenTargets" id="ENSG00000120533"/>
<dbReference type="PharmGKB" id="PA142671907"/>
<dbReference type="VEuPathDB" id="HostDB:ENSG00000120533"/>
<dbReference type="eggNOG" id="KOG4479">
    <property type="taxonomic scope" value="Eukaryota"/>
</dbReference>
<dbReference type="GeneTree" id="ENSGT00390000011748"/>
<dbReference type="HOGENOM" id="CLU_134052_1_1_1"/>
<dbReference type="InParanoid" id="Q9NPA8"/>
<dbReference type="OMA" id="RLMCRNI"/>
<dbReference type="OrthoDB" id="6221744at2759"/>
<dbReference type="PAN-GO" id="Q9NPA8">
    <property type="GO annotations" value="7 GO annotations based on evolutionary models"/>
</dbReference>
<dbReference type="PhylomeDB" id="Q9NPA8"/>
<dbReference type="TreeFam" id="TF326556"/>
<dbReference type="PathwayCommons" id="Q9NPA8"/>
<dbReference type="Reactome" id="R-HSA-3214847">
    <property type="pathway name" value="HATs acetylate histones"/>
</dbReference>
<dbReference type="SignaLink" id="Q9NPA8"/>
<dbReference type="SIGNOR" id="Q9NPA8"/>
<dbReference type="BioGRID-ORCS" id="56943">
    <property type="hits" value="336 hits in 1141 CRISPR screens"/>
</dbReference>
<dbReference type="CD-CODE" id="D6A53B8E">
    <property type="entry name" value="Nuclear pore complex"/>
</dbReference>
<dbReference type="ChiTaRS" id="ENY2">
    <property type="organism name" value="human"/>
</dbReference>
<dbReference type="EvolutionaryTrace" id="Q9NPA8"/>
<dbReference type="GenomeRNAi" id="56943"/>
<dbReference type="Pharos" id="Q9NPA8">
    <property type="development level" value="Tbio"/>
</dbReference>
<dbReference type="PRO" id="PR:Q9NPA8"/>
<dbReference type="Proteomes" id="UP000005640">
    <property type="component" value="Chromosome 8"/>
</dbReference>
<dbReference type="RNAct" id="Q9NPA8">
    <property type="molecule type" value="protein"/>
</dbReference>
<dbReference type="Bgee" id="ENSG00000120533">
    <property type="expression patterns" value="Expressed in tendon of biceps brachii and 202 other cell types or tissues"/>
</dbReference>
<dbReference type="ExpressionAtlas" id="Q9NPA8">
    <property type="expression patterns" value="baseline and differential"/>
</dbReference>
<dbReference type="GO" id="GO:0071819">
    <property type="term" value="C:DUBm complex"/>
    <property type="evidence" value="ECO:0000314"/>
    <property type="project" value="UniProtKB"/>
</dbReference>
<dbReference type="GO" id="GO:0005739">
    <property type="term" value="C:mitochondrion"/>
    <property type="evidence" value="ECO:0000314"/>
    <property type="project" value="HPA"/>
</dbReference>
<dbReference type="GO" id="GO:0044615">
    <property type="term" value="C:nuclear pore nuclear basket"/>
    <property type="evidence" value="ECO:0000314"/>
    <property type="project" value="UniProtKB"/>
</dbReference>
<dbReference type="GO" id="GO:0005654">
    <property type="term" value="C:nucleoplasm"/>
    <property type="evidence" value="ECO:0000314"/>
    <property type="project" value="HPA"/>
</dbReference>
<dbReference type="GO" id="GO:0000124">
    <property type="term" value="C:SAGA complex"/>
    <property type="evidence" value="ECO:0000314"/>
    <property type="project" value="UniProtKB"/>
</dbReference>
<dbReference type="GO" id="GO:0070390">
    <property type="term" value="C:transcription export complex 2"/>
    <property type="evidence" value="ECO:0000314"/>
    <property type="project" value="UniProtKB"/>
</dbReference>
<dbReference type="GO" id="GO:0033276">
    <property type="term" value="C:transcription factor TFTC complex"/>
    <property type="evidence" value="ECO:0000303"/>
    <property type="project" value="ComplexPortal"/>
</dbReference>
<dbReference type="GO" id="GO:0003682">
    <property type="term" value="F:chromatin binding"/>
    <property type="evidence" value="ECO:0000318"/>
    <property type="project" value="GO_Central"/>
</dbReference>
<dbReference type="GO" id="GO:0003713">
    <property type="term" value="F:transcription coactivator activity"/>
    <property type="evidence" value="ECO:0000314"/>
    <property type="project" value="UniProtKB"/>
</dbReference>
<dbReference type="GO" id="GO:0006325">
    <property type="term" value="P:chromatin organization"/>
    <property type="evidence" value="ECO:0007669"/>
    <property type="project" value="UniProtKB-KW"/>
</dbReference>
<dbReference type="GO" id="GO:0061179">
    <property type="term" value="P:negative regulation of insulin secretion involved in cellular response to glucose stimulus"/>
    <property type="evidence" value="ECO:0007669"/>
    <property type="project" value="Ensembl"/>
</dbReference>
<dbReference type="GO" id="GO:0016973">
    <property type="term" value="P:poly(A)+ mRNA export from nucleus"/>
    <property type="evidence" value="ECO:0000315"/>
    <property type="project" value="UniProtKB"/>
</dbReference>
<dbReference type="GO" id="GO:0045893">
    <property type="term" value="P:positive regulation of DNA-templated transcription"/>
    <property type="evidence" value="ECO:0000314"/>
    <property type="project" value="UniProtKB"/>
</dbReference>
<dbReference type="GO" id="GO:0015031">
    <property type="term" value="P:protein transport"/>
    <property type="evidence" value="ECO:0007669"/>
    <property type="project" value="UniProtKB-KW"/>
</dbReference>
<dbReference type="GO" id="GO:0006282">
    <property type="term" value="P:regulation of DNA repair"/>
    <property type="evidence" value="ECO:0000303"/>
    <property type="project" value="ComplexPortal"/>
</dbReference>
<dbReference type="GO" id="GO:0043484">
    <property type="term" value="P:regulation of RNA splicing"/>
    <property type="evidence" value="ECO:0000303"/>
    <property type="project" value="ComplexPortal"/>
</dbReference>
<dbReference type="GO" id="GO:0006357">
    <property type="term" value="P:regulation of transcription by RNA polymerase II"/>
    <property type="evidence" value="ECO:0000314"/>
    <property type="project" value="ComplexPortal"/>
</dbReference>
<dbReference type="GO" id="GO:0006368">
    <property type="term" value="P:transcription elongation by RNA polymerase II"/>
    <property type="evidence" value="ECO:0007669"/>
    <property type="project" value="UniProtKB-UniRule"/>
</dbReference>
<dbReference type="FunFam" id="1.10.246.140:FF:000001">
    <property type="entry name" value="Transcription and mRNA export factor ENY2"/>
    <property type="match status" value="1"/>
</dbReference>
<dbReference type="Gene3D" id="1.10.246.140">
    <property type="match status" value="1"/>
</dbReference>
<dbReference type="HAMAP" id="MF_03046">
    <property type="entry name" value="ENY2_Sus1"/>
    <property type="match status" value="1"/>
</dbReference>
<dbReference type="InterPro" id="IPR018783">
    <property type="entry name" value="TF_ENY2"/>
</dbReference>
<dbReference type="InterPro" id="IPR038212">
    <property type="entry name" value="TF_EnY2_sf"/>
</dbReference>
<dbReference type="PANTHER" id="PTHR12514">
    <property type="entry name" value="ENHANCER OF YELLOW 2 TRANSCRIPTION FACTOR"/>
    <property type="match status" value="1"/>
</dbReference>
<dbReference type="Pfam" id="PF10163">
    <property type="entry name" value="EnY2"/>
    <property type="match status" value="1"/>
</dbReference>
<comment type="function">
    <text evidence="2 3 5">Involved in mRNA export coupled transcription activation by association with both the TREX-2 and the SAGA complexes. The transcription regulatory histone acetylation (HAT) complex SAGA is a multiprotein complex that activates transcription by remodeling chromatin and mediating histone acetylation and deubiquitination. Within the SAGA complex, participates in a subcomplex that specifically deubiquitinates both histones H2A and H2B. The SAGA complex is recruited to specific gene promoters by activators such as MYC, where it is required for transcription. Required for nuclear receptor-mediated transactivation (PubMed:18206972, PubMed:21746879). As a component of the TREX-2 complex, involved in the export of mRNAs to the cytoplasm through the nuclear pores (PubMed:23591820).</text>
</comment>
<comment type="subunit">
    <text evidence="1 2 3 4 5 6">Component of the nuclear pore complex (NPC)-associated TREX-2 complex (transcription and export complex 2), composed of at least ENY2, the isoform GANP of the MCM3AP gene, PCID2, SEM1, and either centrin CETN2 or CETN3. TREX-2 contains 2 ENY2 chains. The TREX-2 complex also associates with ALYREF/ALY and with the nucleoporin NUP153 (PubMed:22307388, PubMed:23591820). Component of some SAGA transcription coactivator-HAT complexes, at least composed of ATXN7, ATXN7L3, ENY2, GCN5L2, SUPT3H/SPT3, TAF10, TRRAP and USP22 (PubMed:18206972, PubMed:21746879, PubMed:23591820, PubMed:27601583). Within the SAGA complex, ENY2, ATXN7, ATXN7L3, and USP22 form an additional subcomplex of SAGA called the DUB module (deubiquitination module) (PubMed:18206972, PubMed:21746879, PubMed:27601583). Interacts with RNA polymerase II subunit POLR2A (PubMed:22307388). Interacts with ATXN7L3B (PubMed:27601583).</text>
</comment>
<comment type="interaction">
    <interactant intactId="EBI-719226">
        <id>Q9NPA8</id>
    </interactant>
    <interactant intactId="EBI-949215">
        <id>Q14CW9</id>
        <label>ATXN7L3</label>
    </interactant>
    <organismsDiffer>false</organismsDiffer>
    <experiments>9</experiments>
</comment>
<comment type="interaction">
    <interactant intactId="EBI-719226">
        <id>Q9NPA8</id>
    </interactant>
    <interactant intactId="EBI-13328871">
        <id>Q9H6J7-2</id>
        <label>CSTPP1</label>
    </interactant>
    <organismsDiffer>false</organismsDiffer>
    <experiments>3</experiments>
</comment>
<comment type="interaction">
    <interactant intactId="EBI-719226">
        <id>Q9NPA8</id>
    </interactant>
    <interactant intactId="EBI-1642515">
        <id>I6L957</id>
        <label>HNRNPA2B1</label>
    </interactant>
    <organismsDiffer>false</organismsDiffer>
    <experiments>3</experiments>
</comment>
<comment type="subcellular location">
    <subcellularLocation>
        <location evidence="1 4">Nucleus</location>
        <location evidence="1 4">Nucleoplasm</location>
    </subcellularLocation>
    <text evidence="5">Localization at the nuclear pore complex requires NUP153 and TPR.</text>
</comment>
<comment type="alternative products">
    <event type="alternative splicing"/>
    <isoform>
        <id>Q9NPA8-1</id>
        <name>1</name>
        <sequence type="displayed"/>
    </isoform>
    <isoform>
        <id>Q9NPA8-2</id>
        <name>2</name>
        <sequence type="described" ref="VSP_046891"/>
    </isoform>
</comment>
<comment type="similarity">
    <text evidence="1">Belongs to the ENY2 family.</text>
</comment>
<reference key="1">
    <citation type="journal article" date="2001" name="Mol. Cell. Biol.">
        <title>The novel transcription factor e(y)2 interacts with TAF(II)40 and potentiates transcription activation on chromatin templates.</title>
        <authorList>
            <person name="Georgieva S."/>
            <person name="Nabirochkina E."/>
            <person name="Dilworth F.J."/>
            <person name="Eickhoff H."/>
            <person name="Becker P."/>
            <person name="Tora L."/>
            <person name="Georgiev P."/>
            <person name="Soldatov A."/>
        </authorList>
    </citation>
    <scope>NUCLEOTIDE SEQUENCE [MRNA] (ISOFORM 1)</scope>
</reference>
<reference key="2">
    <citation type="submission" date="1999-11" db="EMBL/GenBank/DDBJ databases">
        <title>Novel genes expressed in human dendritic cell.</title>
        <authorList>
            <person name="Gu J."/>
            <person name="Huang Q."/>
            <person name="Yu Y."/>
            <person name="Xu S."/>
            <person name="Han Z."/>
            <person name="Fu G."/>
            <person name="Chen Z."/>
        </authorList>
    </citation>
    <scope>NUCLEOTIDE SEQUENCE [LARGE SCALE MRNA] (ISOFORM 1)</scope>
    <source>
        <tissue>Dendritic cell</tissue>
    </source>
</reference>
<reference key="3">
    <citation type="journal article" date="2004" name="Nat. Genet.">
        <title>Complete sequencing and characterization of 21,243 full-length human cDNAs.</title>
        <authorList>
            <person name="Ota T."/>
            <person name="Suzuki Y."/>
            <person name="Nishikawa T."/>
            <person name="Otsuki T."/>
            <person name="Sugiyama T."/>
            <person name="Irie R."/>
            <person name="Wakamatsu A."/>
            <person name="Hayashi K."/>
            <person name="Sato H."/>
            <person name="Nagai K."/>
            <person name="Kimura K."/>
            <person name="Makita H."/>
            <person name="Sekine M."/>
            <person name="Obayashi M."/>
            <person name="Nishi T."/>
            <person name="Shibahara T."/>
            <person name="Tanaka T."/>
            <person name="Ishii S."/>
            <person name="Yamamoto J."/>
            <person name="Saito K."/>
            <person name="Kawai Y."/>
            <person name="Isono Y."/>
            <person name="Nakamura Y."/>
            <person name="Nagahari K."/>
            <person name="Murakami K."/>
            <person name="Yasuda T."/>
            <person name="Iwayanagi T."/>
            <person name="Wagatsuma M."/>
            <person name="Shiratori A."/>
            <person name="Sudo H."/>
            <person name="Hosoiri T."/>
            <person name="Kaku Y."/>
            <person name="Kodaira H."/>
            <person name="Kondo H."/>
            <person name="Sugawara M."/>
            <person name="Takahashi M."/>
            <person name="Kanda K."/>
            <person name="Yokoi T."/>
            <person name="Furuya T."/>
            <person name="Kikkawa E."/>
            <person name="Omura Y."/>
            <person name="Abe K."/>
            <person name="Kamihara K."/>
            <person name="Katsuta N."/>
            <person name="Sato K."/>
            <person name="Tanikawa M."/>
            <person name="Yamazaki M."/>
            <person name="Ninomiya K."/>
            <person name="Ishibashi T."/>
            <person name="Yamashita H."/>
            <person name="Murakawa K."/>
            <person name="Fujimori K."/>
            <person name="Tanai H."/>
            <person name="Kimata M."/>
            <person name="Watanabe M."/>
            <person name="Hiraoka S."/>
            <person name="Chiba Y."/>
            <person name="Ishida S."/>
            <person name="Ono Y."/>
            <person name="Takiguchi S."/>
            <person name="Watanabe S."/>
            <person name="Yosida M."/>
            <person name="Hotuta T."/>
            <person name="Kusano J."/>
            <person name="Kanehori K."/>
            <person name="Takahashi-Fujii A."/>
            <person name="Hara H."/>
            <person name="Tanase T.-O."/>
            <person name="Nomura Y."/>
            <person name="Togiya S."/>
            <person name="Komai F."/>
            <person name="Hara R."/>
            <person name="Takeuchi K."/>
            <person name="Arita M."/>
            <person name="Imose N."/>
            <person name="Musashino K."/>
            <person name="Yuuki H."/>
            <person name="Oshima A."/>
            <person name="Sasaki N."/>
            <person name="Aotsuka S."/>
            <person name="Yoshikawa Y."/>
            <person name="Matsunawa H."/>
            <person name="Ichihara T."/>
            <person name="Shiohata N."/>
            <person name="Sano S."/>
            <person name="Moriya S."/>
            <person name="Momiyama H."/>
            <person name="Satoh N."/>
            <person name="Takami S."/>
            <person name="Terashima Y."/>
            <person name="Suzuki O."/>
            <person name="Nakagawa S."/>
            <person name="Senoh A."/>
            <person name="Mizoguchi H."/>
            <person name="Goto Y."/>
            <person name="Shimizu F."/>
            <person name="Wakebe H."/>
            <person name="Hishigaki H."/>
            <person name="Watanabe T."/>
            <person name="Sugiyama A."/>
            <person name="Takemoto M."/>
            <person name="Kawakami B."/>
            <person name="Yamazaki M."/>
            <person name="Watanabe K."/>
            <person name="Kumagai A."/>
            <person name="Itakura S."/>
            <person name="Fukuzumi Y."/>
            <person name="Fujimori Y."/>
            <person name="Komiyama M."/>
            <person name="Tashiro H."/>
            <person name="Tanigami A."/>
            <person name="Fujiwara T."/>
            <person name="Ono T."/>
            <person name="Yamada K."/>
            <person name="Fujii Y."/>
            <person name="Ozaki K."/>
            <person name="Hirao M."/>
            <person name="Ohmori Y."/>
            <person name="Kawabata A."/>
            <person name="Hikiji T."/>
            <person name="Kobatake N."/>
            <person name="Inagaki H."/>
            <person name="Ikema Y."/>
            <person name="Okamoto S."/>
            <person name="Okitani R."/>
            <person name="Kawakami T."/>
            <person name="Noguchi S."/>
            <person name="Itoh T."/>
            <person name="Shigeta K."/>
            <person name="Senba T."/>
            <person name="Matsumura K."/>
            <person name="Nakajima Y."/>
            <person name="Mizuno T."/>
            <person name="Morinaga M."/>
            <person name="Sasaki M."/>
            <person name="Togashi T."/>
            <person name="Oyama M."/>
            <person name="Hata H."/>
            <person name="Watanabe M."/>
            <person name="Komatsu T."/>
            <person name="Mizushima-Sugano J."/>
            <person name="Satoh T."/>
            <person name="Shirai Y."/>
            <person name="Takahashi Y."/>
            <person name="Nakagawa K."/>
            <person name="Okumura K."/>
            <person name="Nagase T."/>
            <person name="Nomura N."/>
            <person name="Kikuchi H."/>
            <person name="Masuho Y."/>
            <person name="Yamashita R."/>
            <person name="Nakai K."/>
            <person name="Yada T."/>
            <person name="Nakamura Y."/>
            <person name="Ohara O."/>
            <person name="Isogai T."/>
            <person name="Sugano S."/>
        </authorList>
    </citation>
    <scope>NUCLEOTIDE SEQUENCE [LARGE SCALE MRNA] (ISOFORM 1)</scope>
    <source>
        <tissue>Hippocampus</tissue>
    </source>
</reference>
<reference key="4">
    <citation type="submission" date="2004-06" db="EMBL/GenBank/DDBJ databases">
        <title>Cloning of human full open reading frames in Gateway(TM) system entry vector (pDONR201).</title>
        <authorList>
            <person name="Ebert L."/>
            <person name="Schick M."/>
            <person name="Neubert P."/>
            <person name="Schatten R."/>
            <person name="Henze S."/>
            <person name="Korn B."/>
        </authorList>
    </citation>
    <scope>NUCLEOTIDE SEQUENCE [LARGE SCALE MRNA] (ISOFORM 1)</scope>
</reference>
<reference key="5">
    <citation type="journal article" date="2006" name="Nature">
        <title>DNA sequence and analysis of human chromosome 8.</title>
        <authorList>
            <person name="Nusbaum C."/>
            <person name="Mikkelsen T.S."/>
            <person name="Zody M.C."/>
            <person name="Asakawa S."/>
            <person name="Taudien S."/>
            <person name="Garber M."/>
            <person name="Kodira C.D."/>
            <person name="Schueler M.G."/>
            <person name="Shimizu A."/>
            <person name="Whittaker C.A."/>
            <person name="Chang J.L."/>
            <person name="Cuomo C.A."/>
            <person name="Dewar K."/>
            <person name="FitzGerald M.G."/>
            <person name="Yang X."/>
            <person name="Allen N.R."/>
            <person name="Anderson S."/>
            <person name="Asakawa T."/>
            <person name="Blechschmidt K."/>
            <person name="Bloom T."/>
            <person name="Borowsky M.L."/>
            <person name="Butler J."/>
            <person name="Cook A."/>
            <person name="Corum B."/>
            <person name="DeArellano K."/>
            <person name="DeCaprio D."/>
            <person name="Dooley K.T."/>
            <person name="Dorris L. III"/>
            <person name="Engels R."/>
            <person name="Gloeckner G."/>
            <person name="Hafez N."/>
            <person name="Hagopian D.S."/>
            <person name="Hall J.L."/>
            <person name="Ishikawa S.K."/>
            <person name="Jaffe D.B."/>
            <person name="Kamat A."/>
            <person name="Kudoh J."/>
            <person name="Lehmann R."/>
            <person name="Lokitsang T."/>
            <person name="Macdonald P."/>
            <person name="Major J.E."/>
            <person name="Matthews C.D."/>
            <person name="Mauceli E."/>
            <person name="Menzel U."/>
            <person name="Mihalev A.H."/>
            <person name="Minoshima S."/>
            <person name="Murayama Y."/>
            <person name="Naylor J.W."/>
            <person name="Nicol R."/>
            <person name="Nguyen C."/>
            <person name="O'Leary S.B."/>
            <person name="O'Neill K."/>
            <person name="Parker S.C.J."/>
            <person name="Polley A."/>
            <person name="Raymond C.K."/>
            <person name="Reichwald K."/>
            <person name="Rodriguez J."/>
            <person name="Sasaki T."/>
            <person name="Schilhabel M."/>
            <person name="Siddiqui R."/>
            <person name="Smith C.L."/>
            <person name="Sneddon T.P."/>
            <person name="Talamas J.A."/>
            <person name="Tenzin P."/>
            <person name="Topham K."/>
            <person name="Venkataraman V."/>
            <person name="Wen G."/>
            <person name="Yamazaki S."/>
            <person name="Young S.K."/>
            <person name="Zeng Q."/>
            <person name="Zimmer A.R."/>
            <person name="Rosenthal A."/>
            <person name="Birren B.W."/>
            <person name="Platzer M."/>
            <person name="Shimizu N."/>
            <person name="Lander E.S."/>
        </authorList>
    </citation>
    <scope>NUCLEOTIDE SEQUENCE [LARGE SCALE GENOMIC DNA]</scope>
</reference>
<reference key="6">
    <citation type="submission" date="2005-07" db="EMBL/GenBank/DDBJ databases">
        <authorList>
            <person name="Mural R.J."/>
            <person name="Istrail S."/>
            <person name="Sutton G.G."/>
            <person name="Florea L."/>
            <person name="Halpern A.L."/>
            <person name="Mobarry C.M."/>
            <person name="Lippert R."/>
            <person name="Walenz B."/>
            <person name="Shatkay H."/>
            <person name="Dew I."/>
            <person name="Miller J.R."/>
            <person name="Flanigan M.J."/>
            <person name="Edwards N.J."/>
            <person name="Bolanos R."/>
            <person name="Fasulo D."/>
            <person name="Halldorsson B.V."/>
            <person name="Hannenhalli S."/>
            <person name="Turner R."/>
            <person name="Yooseph S."/>
            <person name="Lu F."/>
            <person name="Nusskern D.R."/>
            <person name="Shue B.C."/>
            <person name="Zheng X.H."/>
            <person name="Zhong F."/>
            <person name="Delcher A.L."/>
            <person name="Huson D.H."/>
            <person name="Kravitz S.A."/>
            <person name="Mouchard L."/>
            <person name="Reinert K."/>
            <person name="Remington K.A."/>
            <person name="Clark A.G."/>
            <person name="Waterman M.S."/>
            <person name="Eichler E.E."/>
            <person name="Adams M.D."/>
            <person name="Hunkapiller M.W."/>
            <person name="Myers E.W."/>
            <person name="Venter J.C."/>
        </authorList>
    </citation>
    <scope>NUCLEOTIDE SEQUENCE [LARGE SCALE GENOMIC DNA]</scope>
</reference>
<reference key="7">
    <citation type="journal article" date="2004" name="Genome Res.">
        <title>The status, quality, and expansion of the NIH full-length cDNA project: the Mammalian Gene Collection (MGC).</title>
        <authorList>
            <consortium name="The MGC Project Team"/>
        </authorList>
    </citation>
    <scope>NUCLEOTIDE SEQUENCE [LARGE SCALE MRNA] (ISOFORM 1)</scope>
    <source>
        <tissue>Uterus</tissue>
    </source>
</reference>
<reference key="8">
    <citation type="journal article" date="2008" name="Mol. Cell">
        <title>A TFTC/STAGA module mediates histone H2A and H2B deubiquitination, coactivates nuclear receptors, and counteracts heterochromatin silencing.</title>
        <authorList>
            <person name="Zhao Y."/>
            <person name="Lang G."/>
            <person name="Ito S."/>
            <person name="Bonnet J."/>
            <person name="Metzger E."/>
            <person name="Sawatsubashi S."/>
            <person name="Suzuki E."/>
            <person name="Le Guezennec X."/>
            <person name="Stunnenberg H.G."/>
            <person name="Krasnov A."/>
            <person name="Georgieva S.G."/>
            <person name="Schuele R."/>
            <person name="Takeyama K."/>
            <person name="Kato S."/>
            <person name="Tora L."/>
            <person name="Devys D."/>
        </authorList>
    </citation>
    <scope>FUNCTION</scope>
    <scope>IDENTIFICATION BY MASS SPECTROMETRY</scope>
    <scope>IDENTIFICATION IN THE SAGA COMPLEX</scope>
</reference>
<reference key="9">
    <citation type="journal article" date="2011" name="BMC Syst. Biol.">
        <title>Initial characterization of the human central proteome.</title>
        <authorList>
            <person name="Burkard T.R."/>
            <person name="Planyavsky M."/>
            <person name="Kaupe I."/>
            <person name="Breitwieser F.P."/>
            <person name="Buerckstuemmer T."/>
            <person name="Bennett K.L."/>
            <person name="Superti-Furga G."/>
            <person name="Colinge J."/>
        </authorList>
    </citation>
    <scope>IDENTIFICATION BY MASS SPECTROMETRY [LARGE SCALE ANALYSIS]</scope>
</reference>
<reference key="10">
    <citation type="journal article" date="2011" name="Mol. Cell. Biol.">
        <title>The tightly controlled deubiquitination activity of the human SAGA complex differentially modifies distinct gene regulatory elements.</title>
        <authorList>
            <person name="Lang G."/>
            <person name="Bonnet J."/>
            <person name="Umlauf D."/>
            <person name="Karmodiya K."/>
            <person name="Koffler J."/>
            <person name="Stierle M."/>
            <person name="Devys D."/>
            <person name="Tora L."/>
        </authorList>
    </citation>
    <scope>FUNCTION</scope>
    <scope>IDENTIFICATION IN THE SAGA COMPLEX</scope>
</reference>
<reference key="11">
    <citation type="journal article" date="2012" name="Proc. Natl. Acad. Sci. U.S.A.">
        <title>N-terminal acetylome analyses and functional insights of the N-terminal acetyltransferase NatB.</title>
        <authorList>
            <person name="Van Damme P."/>
            <person name="Lasa M."/>
            <person name="Polevoda B."/>
            <person name="Gazquez C."/>
            <person name="Elosegui-Artola A."/>
            <person name="Kim D.S."/>
            <person name="De Juan-Pardo E."/>
            <person name="Demeyer K."/>
            <person name="Hole K."/>
            <person name="Larrea E."/>
            <person name="Timmerman E."/>
            <person name="Prieto J."/>
            <person name="Arnesen T."/>
            <person name="Sherman F."/>
            <person name="Gevaert K."/>
            <person name="Aldabe R."/>
        </authorList>
    </citation>
    <scope>ACETYLATION [LARGE SCALE ANALYSIS] AT MET-1 (ISOFORM 2)</scope>
    <scope>IDENTIFICATION BY MASS SPECTROMETRY [LARGE SCALE ANALYSIS]</scope>
</reference>
<reference key="12">
    <citation type="journal article" date="2013" name="J. Cell Sci.">
        <title>The human TREX-2 complex is stably associated with the nuclear pore basket.</title>
        <authorList>
            <person name="Umlauf D."/>
            <person name="Bonnet J."/>
            <person name="Waharte F."/>
            <person name="Fournier M."/>
            <person name="Stierle M."/>
            <person name="Fischer B."/>
            <person name="Brino L."/>
            <person name="Devys D."/>
            <person name="Tora L."/>
        </authorList>
    </citation>
    <scope>IDENTIFICATION IN THE TREX-2 COMPLEX AND IN THE SAGA COMPLEX</scope>
    <scope>SUBCELLULAR LOCATION</scope>
</reference>
<reference key="13">
    <citation type="journal article" date="2016" name="Mol. Cell. Biol.">
        <title>Cytoplasmic ATXN7L3B interferes with nuclear functions of the SAGA deubiquitinase module.</title>
        <authorList>
            <person name="Li W."/>
            <person name="Atanassov B.S."/>
            <person name="Lan X."/>
            <person name="Mohan R.D."/>
            <person name="Swanson S.K."/>
            <person name="Farria A.T."/>
            <person name="Florens L."/>
            <person name="Washburn M.P."/>
            <person name="Workman J.L."/>
            <person name="Dent S.Y."/>
        </authorList>
    </citation>
    <scope>IDENTIFICATION IN THE SAGA COMPLEX</scope>
    <scope>INTERACTION WITH ATXN7L3 AND ATXN7L3B</scope>
</reference>
<reference key="14">
    <citation type="journal article" date="2017" name="Nat. Struct. Mol. Biol.">
        <title>Site-specific mapping of the human SUMO proteome reveals co-modification with phosphorylation.</title>
        <authorList>
            <person name="Hendriks I.A."/>
            <person name="Lyon D."/>
            <person name="Young C."/>
            <person name="Jensen L.J."/>
            <person name="Vertegaal A.C."/>
            <person name="Nielsen M.L."/>
        </authorList>
    </citation>
    <scope>SUMOYLATION [LARGE SCALE ANALYSIS] AT LYS-74</scope>
    <scope>IDENTIFICATION BY MASS SPECTROMETRY [LARGE SCALE ANALYSIS]</scope>
</reference>
<reference key="15">
    <citation type="journal article" date="2012" name="Nucleic Acids Res.">
        <title>Functional and structural characterization of the mammalian TREX-2 complex that links transcription with nuclear messenger RNA export.</title>
        <authorList>
            <person name="Jani D."/>
            <person name="Lutz S."/>
            <person name="Hurt E."/>
            <person name="Laskey R.A."/>
            <person name="Stewart M."/>
            <person name="Wickramasinghe V.O."/>
        </authorList>
    </citation>
    <scope>X-RAY CRYSTALLOGRAPHY (2.10 ANGSTROMS) IN COMPLEX WITH GANP</scope>
    <scope>IDENTIFICATION IN THE TREX-2 COMPLEX</scope>
    <scope>SUBCELLULAR LOCATION</scope>
</reference>
<proteinExistence type="evidence at protein level"/>
<name>ENY2_HUMAN</name>
<sequence>MVVSKMNKDAQMRAAINQKLIETGERERLKELLRAKLIECGWKDQLKAHCKEVIKEKGLEHVTVDDLVAEITPKGRALVPDSVKKELLQRIRTFLAQHASL</sequence>
<organism>
    <name type="scientific">Homo sapiens</name>
    <name type="common">Human</name>
    <dbReference type="NCBI Taxonomy" id="9606"/>
    <lineage>
        <taxon>Eukaryota</taxon>
        <taxon>Metazoa</taxon>
        <taxon>Chordata</taxon>
        <taxon>Craniata</taxon>
        <taxon>Vertebrata</taxon>
        <taxon>Euteleostomi</taxon>
        <taxon>Mammalia</taxon>
        <taxon>Eutheria</taxon>
        <taxon>Euarchontoglires</taxon>
        <taxon>Primates</taxon>
        <taxon>Haplorrhini</taxon>
        <taxon>Catarrhini</taxon>
        <taxon>Hominidae</taxon>
        <taxon>Homo</taxon>
    </lineage>
</organism>
<accession>Q9NPA8</accession>
<accession>B2RE52</accession>
<accession>G3V117</accession>
<gene>
    <name evidence="1" type="primary">ENY2</name>
    <name type="ORF">DC6</name>
</gene>
<evidence type="ECO:0000255" key="1">
    <source>
        <dbReference type="HAMAP-Rule" id="MF_03046"/>
    </source>
</evidence>
<evidence type="ECO:0000269" key="2">
    <source>
    </source>
</evidence>
<evidence type="ECO:0000269" key="3">
    <source>
    </source>
</evidence>
<evidence type="ECO:0000269" key="4">
    <source>
    </source>
</evidence>
<evidence type="ECO:0000269" key="5">
    <source>
    </source>
</evidence>
<evidence type="ECO:0000269" key="6">
    <source>
    </source>
</evidence>
<evidence type="ECO:0000305" key="7"/>
<evidence type="ECO:0007744" key="8">
    <source>
    </source>
</evidence>
<evidence type="ECO:0007744" key="9">
    <source>
    </source>
</evidence>
<evidence type="ECO:0007829" key="10">
    <source>
        <dbReference type="PDB" id="4DHX"/>
    </source>
</evidence>